<feature type="chain" id="PRO_0000348871" description="tRNA-cytidine(32) 2-sulfurtransferase">
    <location>
        <begin position="1"/>
        <end position="300"/>
    </location>
</feature>
<feature type="short sequence motif" description="PP-loop motif" evidence="1">
    <location>
        <begin position="57"/>
        <end position="62"/>
    </location>
</feature>
<feature type="binding site" evidence="1">
    <location>
        <position position="132"/>
    </location>
    <ligand>
        <name>[4Fe-4S] cluster</name>
        <dbReference type="ChEBI" id="CHEBI:49883"/>
    </ligand>
</feature>
<feature type="binding site" evidence="1">
    <location>
        <position position="135"/>
    </location>
    <ligand>
        <name>[4Fe-4S] cluster</name>
        <dbReference type="ChEBI" id="CHEBI:49883"/>
    </ligand>
</feature>
<feature type="binding site" evidence="1">
    <location>
        <position position="223"/>
    </location>
    <ligand>
        <name>[4Fe-4S] cluster</name>
        <dbReference type="ChEBI" id="CHEBI:49883"/>
    </ligand>
</feature>
<accession>B0RYY8</accession>
<organism>
    <name type="scientific">Xanthomonas campestris pv. campestris (strain B100)</name>
    <dbReference type="NCBI Taxonomy" id="509169"/>
    <lineage>
        <taxon>Bacteria</taxon>
        <taxon>Pseudomonadati</taxon>
        <taxon>Pseudomonadota</taxon>
        <taxon>Gammaproteobacteria</taxon>
        <taxon>Lysobacterales</taxon>
        <taxon>Lysobacteraceae</taxon>
        <taxon>Xanthomonas</taxon>
    </lineage>
</organism>
<name>TTCA_XANCB</name>
<dbReference type="EC" id="2.8.1.-" evidence="1"/>
<dbReference type="EMBL" id="AM920689">
    <property type="protein sequence ID" value="CAP53674.1"/>
    <property type="status" value="ALT_INIT"/>
    <property type="molecule type" value="Genomic_DNA"/>
</dbReference>
<dbReference type="SMR" id="B0RYY8"/>
<dbReference type="KEGG" id="xca:xcc-b100_4304"/>
<dbReference type="HOGENOM" id="CLU_026481_0_1_6"/>
<dbReference type="Proteomes" id="UP000001188">
    <property type="component" value="Chromosome"/>
</dbReference>
<dbReference type="GO" id="GO:0005737">
    <property type="term" value="C:cytoplasm"/>
    <property type="evidence" value="ECO:0007669"/>
    <property type="project" value="UniProtKB-SubCell"/>
</dbReference>
<dbReference type="GO" id="GO:0051539">
    <property type="term" value="F:4 iron, 4 sulfur cluster binding"/>
    <property type="evidence" value="ECO:0007669"/>
    <property type="project" value="UniProtKB-UniRule"/>
</dbReference>
<dbReference type="GO" id="GO:0005524">
    <property type="term" value="F:ATP binding"/>
    <property type="evidence" value="ECO:0007669"/>
    <property type="project" value="UniProtKB-UniRule"/>
</dbReference>
<dbReference type="GO" id="GO:0000287">
    <property type="term" value="F:magnesium ion binding"/>
    <property type="evidence" value="ECO:0007669"/>
    <property type="project" value="UniProtKB-UniRule"/>
</dbReference>
<dbReference type="GO" id="GO:0016783">
    <property type="term" value="F:sulfurtransferase activity"/>
    <property type="evidence" value="ECO:0007669"/>
    <property type="project" value="UniProtKB-UniRule"/>
</dbReference>
<dbReference type="GO" id="GO:0000049">
    <property type="term" value="F:tRNA binding"/>
    <property type="evidence" value="ECO:0007669"/>
    <property type="project" value="UniProtKB-KW"/>
</dbReference>
<dbReference type="GO" id="GO:0034227">
    <property type="term" value="P:tRNA thio-modification"/>
    <property type="evidence" value="ECO:0007669"/>
    <property type="project" value="UniProtKB-UniRule"/>
</dbReference>
<dbReference type="CDD" id="cd24138">
    <property type="entry name" value="TtcA-like"/>
    <property type="match status" value="1"/>
</dbReference>
<dbReference type="Gene3D" id="3.40.50.620">
    <property type="entry name" value="HUPs"/>
    <property type="match status" value="1"/>
</dbReference>
<dbReference type="HAMAP" id="MF_01850">
    <property type="entry name" value="TtcA"/>
    <property type="match status" value="1"/>
</dbReference>
<dbReference type="InterPro" id="IPR014729">
    <property type="entry name" value="Rossmann-like_a/b/a_fold"/>
</dbReference>
<dbReference type="InterPro" id="IPR011063">
    <property type="entry name" value="TilS/TtcA_N"/>
</dbReference>
<dbReference type="InterPro" id="IPR012089">
    <property type="entry name" value="tRNA_Cyd_32_2_STrfase"/>
</dbReference>
<dbReference type="InterPro" id="IPR035107">
    <property type="entry name" value="tRNA_thiolation_TtcA_Ctu1"/>
</dbReference>
<dbReference type="NCBIfam" id="NF007972">
    <property type="entry name" value="PRK10696.1"/>
    <property type="match status" value="1"/>
</dbReference>
<dbReference type="PANTHER" id="PTHR43686:SF1">
    <property type="entry name" value="AMINOTRAN_5 DOMAIN-CONTAINING PROTEIN"/>
    <property type="match status" value="1"/>
</dbReference>
<dbReference type="PANTHER" id="PTHR43686">
    <property type="entry name" value="SULFURTRANSFERASE-RELATED"/>
    <property type="match status" value="1"/>
</dbReference>
<dbReference type="Pfam" id="PF01171">
    <property type="entry name" value="ATP_bind_3"/>
    <property type="match status" value="1"/>
</dbReference>
<dbReference type="PIRSF" id="PIRSF004976">
    <property type="entry name" value="ATPase_YdaO"/>
    <property type="match status" value="1"/>
</dbReference>
<dbReference type="SUPFAM" id="SSF52402">
    <property type="entry name" value="Adenine nucleotide alpha hydrolases-like"/>
    <property type="match status" value="1"/>
</dbReference>
<proteinExistence type="inferred from homology"/>
<gene>
    <name evidence="1" type="primary">ttcA</name>
    <name type="ordered locus">xcc-b100_4304</name>
</gene>
<comment type="function">
    <text evidence="1">Catalyzes the ATP-dependent 2-thiolation of cytidine in position 32 of tRNA, to form 2-thiocytidine (s(2)C32). The sulfur atoms are provided by the cysteine/cysteine desulfurase (IscS) system.</text>
</comment>
<comment type="catalytic activity">
    <reaction evidence="1">
        <text>cytidine(32) in tRNA + S-sulfanyl-L-cysteinyl-[cysteine desulfurase] + AH2 + ATP = 2-thiocytidine(32) in tRNA + L-cysteinyl-[cysteine desulfurase] + A + AMP + diphosphate + H(+)</text>
        <dbReference type="Rhea" id="RHEA:57048"/>
        <dbReference type="Rhea" id="RHEA-COMP:10288"/>
        <dbReference type="Rhea" id="RHEA-COMP:12157"/>
        <dbReference type="Rhea" id="RHEA-COMP:12158"/>
        <dbReference type="Rhea" id="RHEA-COMP:14821"/>
        <dbReference type="ChEBI" id="CHEBI:13193"/>
        <dbReference type="ChEBI" id="CHEBI:15378"/>
        <dbReference type="ChEBI" id="CHEBI:17499"/>
        <dbReference type="ChEBI" id="CHEBI:29950"/>
        <dbReference type="ChEBI" id="CHEBI:30616"/>
        <dbReference type="ChEBI" id="CHEBI:33019"/>
        <dbReference type="ChEBI" id="CHEBI:61963"/>
        <dbReference type="ChEBI" id="CHEBI:82748"/>
        <dbReference type="ChEBI" id="CHEBI:141453"/>
        <dbReference type="ChEBI" id="CHEBI:456215"/>
    </reaction>
    <physiologicalReaction direction="left-to-right" evidence="1">
        <dbReference type="Rhea" id="RHEA:57049"/>
    </physiologicalReaction>
</comment>
<comment type="cofactor">
    <cofactor evidence="1">
        <name>Mg(2+)</name>
        <dbReference type="ChEBI" id="CHEBI:18420"/>
    </cofactor>
</comment>
<comment type="cofactor">
    <cofactor evidence="1">
        <name>[4Fe-4S] cluster</name>
        <dbReference type="ChEBI" id="CHEBI:49883"/>
    </cofactor>
    <text evidence="1">Binds 1 [4Fe-4S] cluster per subunit. The cluster is chelated by three Cys residues, the fourth Fe has a free coordination site that may bind a sulfur atom transferred from the persulfide of IscS.</text>
</comment>
<comment type="pathway">
    <text evidence="1">tRNA modification.</text>
</comment>
<comment type="subunit">
    <text evidence="1">Homodimer.</text>
</comment>
<comment type="subcellular location">
    <subcellularLocation>
        <location evidence="1">Cytoplasm</location>
    </subcellularLocation>
</comment>
<comment type="miscellaneous">
    <text evidence="1">The thiolation reaction likely consists of two steps: a first activation step by ATP to form an adenylated intermediate of the target base of tRNA, and a second nucleophilic substitution step of the sulfur (S) atom supplied by the hydrosulfide attached to the Fe-S cluster.</text>
</comment>
<comment type="similarity">
    <text evidence="1">Belongs to the TtcA family.</text>
</comment>
<comment type="sequence caution" evidence="2">
    <conflict type="erroneous initiation">
        <sequence resource="EMBL-CDS" id="CAP53674"/>
    </conflict>
    <text>Extended N-terminus.</text>
</comment>
<keyword id="KW-0004">4Fe-4S</keyword>
<keyword id="KW-0067">ATP-binding</keyword>
<keyword id="KW-0963">Cytoplasm</keyword>
<keyword id="KW-0408">Iron</keyword>
<keyword id="KW-0411">Iron-sulfur</keyword>
<keyword id="KW-0460">Magnesium</keyword>
<keyword id="KW-0479">Metal-binding</keyword>
<keyword id="KW-0547">Nucleotide-binding</keyword>
<keyword id="KW-0694">RNA-binding</keyword>
<keyword id="KW-0808">Transferase</keyword>
<keyword id="KW-0819">tRNA processing</keyword>
<keyword id="KW-0820">tRNA-binding</keyword>
<reference key="1">
    <citation type="journal article" date="2008" name="J. Biotechnol.">
        <title>The genome of Xanthomonas campestris pv. campestris B100 and its use for the reconstruction of metabolic pathways involved in xanthan biosynthesis.</title>
        <authorList>
            <person name="Vorhoelter F.-J."/>
            <person name="Schneiker S."/>
            <person name="Goesmann A."/>
            <person name="Krause L."/>
            <person name="Bekel T."/>
            <person name="Kaiser O."/>
            <person name="Linke B."/>
            <person name="Patschkowski T."/>
            <person name="Rueckert C."/>
            <person name="Schmid J."/>
            <person name="Sidhu V.K."/>
            <person name="Sieber V."/>
            <person name="Tauch A."/>
            <person name="Watt S.A."/>
            <person name="Weisshaar B."/>
            <person name="Becker A."/>
            <person name="Niehaus K."/>
            <person name="Puehler A."/>
        </authorList>
    </citation>
    <scope>NUCLEOTIDE SEQUENCE [LARGE SCALE GENOMIC DNA]</scope>
    <source>
        <strain>B100</strain>
    </source>
</reference>
<protein>
    <recommendedName>
        <fullName evidence="1">tRNA-cytidine(32) 2-sulfurtransferase</fullName>
        <ecNumber evidence="1">2.8.1.-</ecNumber>
    </recommendedName>
    <alternativeName>
        <fullName evidence="1">Two-thiocytidine biosynthesis protein A</fullName>
    </alternativeName>
    <alternativeName>
        <fullName evidence="1">tRNA 2-thiocytidine biosynthesis protein TtcA</fullName>
    </alternativeName>
</protein>
<sequence length="300" mass="32958">MTAVLPLPLPLADPAPRTPRLQREPLRLAKRLRHAVGQAIADFGMIAPGDKVMVCLSGGKDSYTLLDMLLQLQRSAPVPFTLVAVNLDQKQPDFPADVLPTYLRAQQVPFDIIEQDTYSVVSRVIPQGKTMCSLCSRLRRGALYAYAQAHGVTKIALGHHRDDIVATFFMNLFHHARLAAMAPKLRSDDGAHVVIRPLAYVREADIAAYAQARHFPIIPCNLCGSQENLQRQQVGRMLQQWDREQPGRVDQIARALGDVRPEQLADRTLFDFPGLGGGADAPLPDAAGWLAGSAAEHARD</sequence>
<evidence type="ECO:0000255" key="1">
    <source>
        <dbReference type="HAMAP-Rule" id="MF_01850"/>
    </source>
</evidence>
<evidence type="ECO:0000305" key="2"/>